<comment type="function">
    <text evidence="2">Component of the ubiquinol-cytochrome c reductase complex (complex III or cytochrome b-c1 complex) that is part of the mitochondrial respiratory chain. The b-c1 complex mediates electron transfer from ubiquinol to cytochrome c. Contributes to the generation of a proton gradient across the mitochondrial membrane that is then used for ATP synthesis.</text>
</comment>
<comment type="cofactor">
    <cofactor evidence="2">
        <name>heme b</name>
        <dbReference type="ChEBI" id="CHEBI:60344"/>
    </cofactor>
    <text evidence="2">Binds 2 heme b groups non-covalently.</text>
</comment>
<comment type="subunit">
    <text evidence="2">The cytochrome bc1 complex contains 11 subunits: 3 respiratory subunits (MT-CYB, CYC1 and UQCRFS1), 2 core proteins (UQCRC1 and UQCRC2) and 6 low-molecular weight proteins (UQCRH/QCR6, UQCRB/QCR7, UQCRQ/QCR8, UQCR10/QCR9, UQCR11/QCR10 and a cleavage product of UQCRFS1). This cytochrome bc1 complex then forms a dimer.</text>
</comment>
<comment type="subcellular location">
    <subcellularLocation>
        <location evidence="2">Mitochondrion inner membrane</location>
        <topology evidence="2">Multi-pass membrane protein</topology>
    </subcellularLocation>
</comment>
<comment type="miscellaneous">
    <text evidence="1">Heme 1 (or BL or b562) is low-potential and absorbs at about 562 nm, and heme 2 (or BH or b566) is high-potential and absorbs at about 566 nm.</text>
</comment>
<comment type="similarity">
    <text evidence="3 4">Belongs to the cytochrome b family.</text>
</comment>
<comment type="caution">
    <text evidence="2">The full-length protein contains only eight transmembrane helices, not nine as predicted by bioinformatics tools.</text>
</comment>
<protein>
    <recommendedName>
        <fullName>Cytochrome b</fullName>
    </recommendedName>
    <alternativeName>
        <fullName>Complex III subunit 3</fullName>
    </alternativeName>
    <alternativeName>
        <fullName>Complex III subunit III</fullName>
    </alternativeName>
    <alternativeName>
        <fullName>Cytochrome b-c1 complex subunit 3</fullName>
    </alternativeName>
    <alternativeName>
        <fullName>Ubiquinol-cytochrome-c reductase complex cytochrome b subunit</fullName>
    </alternativeName>
</protein>
<geneLocation type="mitochondrion"/>
<organism>
    <name type="scientific">Cryptotis mexicana</name>
    <name type="common">Mexican small-eared shrew</name>
    <name type="synonym">Blarina mexicana</name>
    <dbReference type="NCBI Taxonomy" id="257448"/>
    <lineage>
        <taxon>Eukaryota</taxon>
        <taxon>Metazoa</taxon>
        <taxon>Chordata</taxon>
        <taxon>Craniata</taxon>
        <taxon>Vertebrata</taxon>
        <taxon>Euteleostomi</taxon>
        <taxon>Mammalia</taxon>
        <taxon>Eutheria</taxon>
        <taxon>Laurasiatheria</taxon>
        <taxon>Eulipotyphla</taxon>
        <taxon>Soricidae</taxon>
        <taxon>Soricinae</taxon>
        <taxon>Cryptotis</taxon>
    </lineage>
</organism>
<dbReference type="EMBL" id="AB175142">
    <property type="protein sequence ID" value="BAE92707.1"/>
    <property type="molecule type" value="Genomic_DNA"/>
</dbReference>
<dbReference type="EMBL" id="AB175143">
    <property type="protein sequence ID" value="BAE92708.1"/>
    <property type="molecule type" value="Genomic_DNA"/>
</dbReference>
<dbReference type="SMR" id="Q1XII9"/>
<dbReference type="GO" id="GO:0005743">
    <property type="term" value="C:mitochondrial inner membrane"/>
    <property type="evidence" value="ECO:0007669"/>
    <property type="project" value="UniProtKB-SubCell"/>
</dbReference>
<dbReference type="GO" id="GO:0045275">
    <property type="term" value="C:respiratory chain complex III"/>
    <property type="evidence" value="ECO:0007669"/>
    <property type="project" value="InterPro"/>
</dbReference>
<dbReference type="GO" id="GO:0046872">
    <property type="term" value="F:metal ion binding"/>
    <property type="evidence" value="ECO:0007669"/>
    <property type="project" value="UniProtKB-KW"/>
</dbReference>
<dbReference type="GO" id="GO:0008121">
    <property type="term" value="F:ubiquinol-cytochrome-c reductase activity"/>
    <property type="evidence" value="ECO:0007669"/>
    <property type="project" value="InterPro"/>
</dbReference>
<dbReference type="GO" id="GO:0006122">
    <property type="term" value="P:mitochondrial electron transport, ubiquinol to cytochrome c"/>
    <property type="evidence" value="ECO:0007669"/>
    <property type="project" value="TreeGrafter"/>
</dbReference>
<dbReference type="CDD" id="cd00290">
    <property type="entry name" value="cytochrome_b_C"/>
    <property type="match status" value="1"/>
</dbReference>
<dbReference type="CDD" id="cd00284">
    <property type="entry name" value="Cytochrome_b_N"/>
    <property type="match status" value="1"/>
</dbReference>
<dbReference type="FunFam" id="1.20.810.10:FF:000002">
    <property type="entry name" value="Cytochrome b"/>
    <property type="match status" value="1"/>
</dbReference>
<dbReference type="Gene3D" id="1.20.810.10">
    <property type="entry name" value="Cytochrome Bc1 Complex, Chain C"/>
    <property type="match status" value="1"/>
</dbReference>
<dbReference type="InterPro" id="IPR005798">
    <property type="entry name" value="Cyt_b/b6_C"/>
</dbReference>
<dbReference type="InterPro" id="IPR036150">
    <property type="entry name" value="Cyt_b/b6_C_sf"/>
</dbReference>
<dbReference type="InterPro" id="IPR005797">
    <property type="entry name" value="Cyt_b/b6_N"/>
</dbReference>
<dbReference type="InterPro" id="IPR027387">
    <property type="entry name" value="Cytb/b6-like_sf"/>
</dbReference>
<dbReference type="InterPro" id="IPR030689">
    <property type="entry name" value="Cytochrome_b"/>
</dbReference>
<dbReference type="InterPro" id="IPR048260">
    <property type="entry name" value="Cytochrome_b_C_euk/bac"/>
</dbReference>
<dbReference type="InterPro" id="IPR048259">
    <property type="entry name" value="Cytochrome_b_N_euk/bac"/>
</dbReference>
<dbReference type="InterPro" id="IPR016174">
    <property type="entry name" value="Di-haem_cyt_TM"/>
</dbReference>
<dbReference type="PANTHER" id="PTHR19271">
    <property type="entry name" value="CYTOCHROME B"/>
    <property type="match status" value="1"/>
</dbReference>
<dbReference type="PANTHER" id="PTHR19271:SF16">
    <property type="entry name" value="CYTOCHROME B"/>
    <property type="match status" value="1"/>
</dbReference>
<dbReference type="Pfam" id="PF00032">
    <property type="entry name" value="Cytochrom_B_C"/>
    <property type="match status" value="1"/>
</dbReference>
<dbReference type="Pfam" id="PF00033">
    <property type="entry name" value="Cytochrome_B"/>
    <property type="match status" value="1"/>
</dbReference>
<dbReference type="PIRSF" id="PIRSF038885">
    <property type="entry name" value="COB"/>
    <property type="match status" value="1"/>
</dbReference>
<dbReference type="SUPFAM" id="SSF81648">
    <property type="entry name" value="a domain/subunit of cytochrome bc1 complex (Ubiquinol-cytochrome c reductase)"/>
    <property type="match status" value="1"/>
</dbReference>
<dbReference type="SUPFAM" id="SSF81342">
    <property type="entry name" value="Transmembrane di-heme cytochromes"/>
    <property type="match status" value="1"/>
</dbReference>
<dbReference type="PROSITE" id="PS51003">
    <property type="entry name" value="CYTB_CTER"/>
    <property type="match status" value="1"/>
</dbReference>
<dbReference type="PROSITE" id="PS51002">
    <property type="entry name" value="CYTB_NTER"/>
    <property type="match status" value="1"/>
</dbReference>
<proteinExistence type="inferred from homology"/>
<gene>
    <name type="primary">MT-CYB</name>
    <name type="synonym">COB</name>
    <name type="synonym">CYTB</name>
    <name type="synonym">MTCYB</name>
</gene>
<reference key="1">
    <citation type="submission" date="2004-03" db="EMBL/GenBank/DDBJ databases">
        <title>Molecular phylogenetics of the Soricidae (Insectivora, Mammalia) based on mitochondrial cytochrome b gene sequences.</title>
        <authorList>
            <person name="Ohdachi S.D."/>
            <person name="Iwasa M.A."/>
            <person name="Abe H."/>
            <person name="Vogel P."/>
            <person name="Oshida T."/>
            <person name="Lin L.K."/>
            <person name="Hasegawa M."/>
        </authorList>
    </citation>
    <scope>NUCLEOTIDE SEQUENCE [GENOMIC DNA]</scope>
    <source>
        <strain>Isolate LAF1509</strain>
        <strain>Isolate LAF1511</strain>
        <tissue>Liver</tissue>
    </source>
</reference>
<feature type="chain" id="PRO_0000254686" description="Cytochrome b">
    <location>
        <begin position="1"/>
        <end position="379"/>
    </location>
</feature>
<feature type="transmembrane region" description="Helical" evidence="2">
    <location>
        <begin position="33"/>
        <end position="53"/>
    </location>
</feature>
<feature type="transmembrane region" description="Helical" evidence="2">
    <location>
        <begin position="77"/>
        <end position="98"/>
    </location>
</feature>
<feature type="transmembrane region" description="Helical" evidence="2">
    <location>
        <begin position="113"/>
        <end position="133"/>
    </location>
</feature>
<feature type="transmembrane region" description="Helical" evidence="2">
    <location>
        <begin position="178"/>
        <end position="198"/>
    </location>
</feature>
<feature type="transmembrane region" description="Helical" evidence="2">
    <location>
        <begin position="226"/>
        <end position="246"/>
    </location>
</feature>
<feature type="transmembrane region" description="Helical" evidence="2">
    <location>
        <begin position="288"/>
        <end position="308"/>
    </location>
</feature>
<feature type="transmembrane region" description="Helical" evidence="2">
    <location>
        <begin position="320"/>
        <end position="340"/>
    </location>
</feature>
<feature type="transmembrane region" description="Helical" evidence="2">
    <location>
        <begin position="347"/>
        <end position="367"/>
    </location>
</feature>
<feature type="binding site" description="axial binding residue" evidence="2">
    <location>
        <position position="83"/>
    </location>
    <ligand>
        <name>heme b</name>
        <dbReference type="ChEBI" id="CHEBI:60344"/>
        <label>b562</label>
    </ligand>
    <ligandPart>
        <name>Fe</name>
        <dbReference type="ChEBI" id="CHEBI:18248"/>
    </ligandPart>
</feature>
<feature type="binding site" description="axial binding residue" evidence="2">
    <location>
        <position position="97"/>
    </location>
    <ligand>
        <name>heme b</name>
        <dbReference type="ChEBI" id="CHEBI:60344"/>
        <label>b566</label>
    </ligand>
    <ligandPart>
        <name>Fe</name>
        <dbReference type="ChEBI" id="CHEBI:18248"/>
    </ligandPart>
</feature>
<feature type="binding site" description="axial binding residue" evidence="2">
    <location>
        <position position="182"/>
    </location>
    <ligand>
        <name>heme b</name>
        <dbReference type="ChEBI" id="CHEBI:60344"/>
        <label>b562</label>
    </ligand>
    <ligandPart>
        <name>Fe</name>
        <dbReference type="ChEBI" id="CHEBI:18248"/>
    </ligandPart>
</feature>
<feature type="binding site" description="axial binding residue" evidence="2">
    <location>
        <position position="196"/>
    </location>
    <ligand>
        <name>heme b</name>
        <dbReference type="ChEBI" id="CHEBI:60344"/>
        <label>b566</label>
    </ligand>
    <ligandPart>
        <name>Fe</name>
        <dbReference type="ChEBI" id="CHEBI:18248"/>
    </ligandPart>
</feature>
<feature type="binding site" evidence="2">
    <location>
        <position position="201"/>
    </location>
    <ligand>
        <name>a ubiquinone</name>
        <dbReference type="ChEBI" id="CHEBI:16389"/>
    </ligand>
</feature>
<feature type="sequence variant" description="In strain: Isolate LAF1511.">
    <original>A</original>
    <variation>V</variation>
    <location>
        <position position="232"/>
    </location>
</feature>
<feature type="sequence variant" description="In strain: Isolate LAF1511.">
    <original>A</original>
    <variation>V</variation>
    <location>
        <position position="236"/>
    </location>
</feature>
<evidence type="ECO:0000250" key="1"/>
<evidence type="ECO:0000250" key="2">
    <source>
        <dbReference type="UniProtKB" id="P00157"/>
    </source>
</evidence>
<evidence type="ECO:0000255" key="3">
    <source>
        <dbReference type="PROSITE-ProRule" id="PRU00967"/>
    </source>
</evidence>
<evidence type="ECO:0000255" key="4">
    <source>
        <dbReference type="PROSITE-ProRule" id="PRU00968"/>
    </source>
</evidence>
<sequence>MTNIRKTHPLMKIINSSFIDLPAPSNISSWWNFGSLLGVCLIIQILTGLFLAMHYTSDTMTAFSSVTHICRDVNYGWLIRYLHANGASMFFICLFLHVGRGLYYGSYMFMETWNIGVLLLFAVMATAFMGYVLPWGQMSFWGATVITNLLSAIPYIGSDLVQWIWGGFSVDKATLTRFFAFHFILPFVIAALAGVHLLFLHETGSNNPSGLSSDADKIPFHPYYTIKDILGALLLALVLTCLVLFSPDLLGDPDNYTPANPLNTPPHIKPEWYFLFAYAILRSIPNKLGGVLALVLSILILAFIPLLHTSKQRSMMFRPLSQCLFWILVADLLTLTWIGGQPVEHPFIIIGQLASILYFSLLLVIMPITSLIENNMLKW</sequence>
<keyword id="KW-0249">Electron transport</keyword>
<keyword id="KW-0349">Heme</keyword>
<keyword id="KW-0408">Iron</keyword>
<keyword id="KW-0472">Membrane</keyword>
<keyword id="KW-0479">Metal-binding</keyword>
<keyword id="KW-0496">Mitochondrion</keyword>
<keyword id="KW-0999">Mitochondrion inner membrane</keyword>
<keyword id="KW-0679">Respiratory chain</keyword>
<keyword id="KW-0812">Transmembrane</keyword>
<keyword id="KW-1133">Transmembrane helix</keyword>
<keyword id="KW-0813">Transport</keyword>
<keyword id="KW-0830">Ubiquinone</keyword>
<name>CYB_CRYME</name>
<accession>Q1XII9</accession>
<accession>Q1XII8</accession>